<comment type="function">
    <text evidence="1">This protein is involved in the repair of mismatches in DNA. It is possible that it carries out the mismatch recognition step. This protein has a weak ATPase activity.</text>
</comment>
<comment type="similarity">
    <text evidence="1">Belongs to the DNA mismatch repair MutS family.</text>
</comment>
<organism>
    <name type="scientific">Escherichia coli O1:K1 / APEC</name>
    <dbReference type="NCBI Taxonomy" id="405955"/>
    <lineage>
        <taxon>Bacteria</taxon>
        <taxon>Pseudomonadati</taxon>
        <taxon>Pseudomonadota</taxon>
        <taxon>Gammaproteobacteria</taxon>
        <taxon>Enterobacterales</taxon>
        <taxon>Enterobacteriaceae</taxon>
        <taxon>Escherichia</taxon>
    </lineage>
</organism>
<protein>
    <recommendedName>
        <fullName evidence="1">DNA mismatch repair protein MutS</fullName>
    </recommendedName>
</protein>
<dbReference type="EMBL" id="CP000468">
    <property type="protein sequence ID" value="ABJ02165.1"/>
    <property type="molecule type" value="Genomic_DNA"/>
</dbReference>
<dbReference type="RefSeq" id="WP_000103864.1">
    <property type="nucleotide sequence ID" value="NZ_CADILS010000020.1"/>
</dbReference>
<dbReference type="SMR" id="A1AES5"/>
<dbReference type="KEGG" id="ecv:APECO1_3791"/>
<dbReference type="HOGENOM" id="CLU_002472_4_0_6"/>
<dbReference type="Proteomes" id="UP000008216">
    <property type="component" value="Chromosome"/>
</dbReference>
<dbReference type="GO" id="GO:0005829">
    <property type="term" value="C:cytosol"/>
    <property type="evidence" value="ECO:0007669"/>
    <property type="project" value="TreeGrafter"/>
</dbReference>
<dbReference type="GO" id="GO:0005524">
    <property type="term" value="F:ATP binding"/>
    <property type="evidence" value="ECO:0007669"/>
    <property type="project" value="UniProtKB-UniRule"/>
</dbReference>
<dbReference type="GO" id="GO:0140664">
    <property type="term" value="F:ATP-dependent DNA damage sensor activity"/>
    <property type="evidence" value="ECO:0007669"/>
    <property type="project" value="InterPro"/>
</dbReference>
<dbReference type="GO" id="GO:0003684">
    <property type="term" value="F:damaged DNA binding"/>
    <property type="evidence" value="ECO:0007669"/>
    <property type="project" value="UniProtKB-UniRule"/>
</dbReference>
<dbReference type="GO" id="GO:0030983">
    <property type="term" value="F:mismatched DNA binding"/>
    <property type="evidence" value="ECO:0007669"/>
    <property type="project" value="InterPro"/>
</dbReference>
<dbReference type="GO" id="GO:0006298">
    <property type="term" value="P:mismatch repair"/>
    <property type="evidence" value="ECO:0007669"/>
    <property type="project" value="UniProtKB-UniRule"/>
</dbReference>
<dbReference type="CDD" id="cd03284">
    <property type="entry name" value="ABC_MutS1"/>
    <property type="match status" value="1"/>
</dbReference>
<dbReference type="FunFam" id="1.10.1420.10:FF:000002">
    <property type="entry name" value="DNA mismatch repair protein MutS"/>
    <property type="match status" value="1"/>
</dbReference>
<dbReference type="FunFam" id="3.30.420.110:FF:000001">
    <property type="entry name" value="DNA mismatch repair protein MutS"/>
    <property type="match status" value="1"/>
</dbReference>
<dbReference type="FunFam" id="3.40.1170.10:FF:000001">
    <property type="entry name" value="DNA mismatch repair protein MutS"/>
    <property type="match status" value="1"/>
</dbReference>
<dbReference type="FunFam" id="3.40.50.300:FF:000283">
    <property type="entry name" value="DNA mismatch repair protein MutS"/>
    <property type="match status" value="1"/>
</dbReference>
<dbReference type="Gene3D" id="1.10.1420.10">
    <property type="match status" value="2"/>
</dbReference>
<dbReference type="Gene3D" id="6.10.140.430">
    <property type="match status" value="1"/>
</dbReference>
<dbReference type="Gene3D" id="3.40.1170.10">
    <property type="entry name" value="DNA repair protein MutS, domain I"/>
    <property type="match status" value="1"/>
</dbReference>
<dbReference type="Gene3D" id="3.30.420.110">
    <property type="entry name" value="MutS, connector domain"/>
    <property type="match status" value="1"/>
</dbReference>
<dbReference type="Gene3D" id="3.40.50.300">
    <property type="entry name" value="P-loop containing nucleotide triphosphate hydrolases"/>
    <property type="match status" value="1"/>
</dbReference>
<dbReference type="HAMAP" id="MF_00096">
    <property type="entry name" value="MutS"/>
    <property type="match status" value="1"/>
</dbReference>
<dbReference type="InterPro" id="IPR005748">
    <property type="entry name" value="DNA_mismatch_repair_MutS"/>
</dbReference>
<dbReference type="InterPro" id="IPR007695">
    <property type="entry name" value="DNA_mismatch_repair_MutS-lik_N"/>
</dbReference>
<dbReference type="InterPro" id="IPR017261">
    <property type="entry name" value="DNA_mismatch_repair_MutS/MSH"/>
</dbReference>
<dbReference type="InterPro" id="IPR000432">
    <property type="entry name" value="DNA_mismatch_repair_MutS_C"/>
</dbReference>
<dbReference type="InterPro" id="IPR007861">
    <property type="entry name" value="DNA_mismatch_repair_MutS_clamp"/>
</dbReference>
<dbReference type="InterPro" id="IPR007696">
    <property type="entry name" value="DNA_mismatch_repair_MutS_core"/>
</dbReference>
<dbReference type="InterPro" id="IPR016151">
    <property type="entry name" value="DNA_mismatch_repair_MutS_N"/>
</dbReference>
<dbReference type="InterPro" id="IPR036187">
    <property type="entry name" value="DNA_mismatch_repair_MutS_sf"/>
</dbReference>
<dbReference type="InterPro" id="IPR007860">
    <property type="entry name" value="DNA_mmatch_repair_MutS_con_dom"/>
</dbReference>
<dbReference type="InterPro" id="IPR045076">
    <property type="entry name" value="MutS"/>
</dbReference>
<dbReference type="InterPro" id="IPR036678">
    <property type="entry name" value="MutS_con_dom_sf"/>
</dbReference>
<dbReference type="InterPro" id="IPR027417">
    <property type="entry name" value="P-loop_NTPase"/>
</dbReference>
<dbReference type="NCBIfam" id="TIGR01070">
    <property type="entry name" value="mutS1"/>
    <property type="match status" value="1"/>
</dbReference>
<dbReference type="NCBIfam" id="NF003810">
    <property type="entry name" value="PRK05399.1"/>
    <property type="match status" value="1"/>
</dbReference>
<dbReference type="PANTHER" id="PTHR11361:SF34">
    <property type="entry name" value="DNA MISMATCH REPAIR PROTEIN MSH1, MITOCHONDRIAL"/>
    <property type="match status" value="1"/>
</dbReference>
<dbReference type="PANTHER" id="PTHR11361">
    <property type="entry name" value="DNA MISMATCH REPAIR PROTEIN MUTS FAMILY MEMBER"/>
    <property type="match status" value="1"/>
</dbReference>
<dbReference type="Pfam" id="PF01624">
    <property type="entry name" value="MutS_I"/>
    <property type="match status" value="1"/>
</dbReference>
<dbReference type="Pfam" id="PF05188">
    <property type="entry name" value="MutS_II"/>
    <property type="match status" value="1"/>
</dbReference>
<dbReference type="Pfam" id="PF05192">
    <property type="entry name" value="MutS_III"/>
    <property type="match status" value="1"/>
</dbReference>
<dbReference type="Pfam" id="PF05190">
    <property type="entry name" value="MutS_IV"/>
    <property type="match status" value="1"/>
</dbReference>
<dbReference type="Pfam" id="PF00488">
    <property type="entry name" value="MutS_V"/>
    <property type="match status" value="1"/>
</dbReference>
<dbReference type="PIRSF" id="PIRSF037677">
    <property type="entry name" value="DNA_mis_repair_Msh6"/>
    <property type="match status" value="1"/>
</dbReference>
<dbReference type="SMART" id="SM00534">
    <property type="entry name" value="MUTSac"/>
    <property type="match status" value="1"/>
</dbReference>
<dbReference type="SMART" id="SM00533">
    <property type="entry name" value="MUTSd"/>
    <property type="match status" value="1"/>
</dbReference>
<dbReference type="SUPFAM" id="SSF55271">
    <property type="entry name" value="DNA repair protein MutS, domain I"/>
    <property type="match status" value="1"/>
</dbReference>
<dbReference type="SUPFAM" id="SSF53150">
    <property type="entry name" value="DNA repair protein MutS, domain II"/>
    <property type="match status" value="1"/>
</dbReference>
<dbReference type="SUPFAM" id="SSF48334">
    <property type="entry name" value="DNA repair protein MutS, domain III"/>
    <property type="match status" value="1"/>
</dbReference>
<dbReference type="SUPFAM" id="SSF52540">
    <property type="entry name" value="P-loop containing nucleoside triphosphate hydrolases"/>
    <property type="match status" value="1"/>
</dbReference>
<dbReference type="PROSITE" id="PS00486">
    <property type="entry name" value="DNA_MISMATCH_REPAIR_2"/>
    <property type="match status" value="1"/>
</dbReference>
<evidence type="ECO:0000255" key="1">
    <source>
        <dbReference type="HAMAP-Rule" id="MF_00096"/>
    </source>
</evidence>
<feature type="chain" id="PRO_1000008057" description="DNA mismatch repair protein MutS">
    <location>
        <begin position="1"/>
        <end position="853"/>
    </location>
</feature>
<feature type="binding site" evidence="1">
    <location>
        <begin position="614"/>
        <end position="621"/>
    </location>
    <ligand>
        <name>ATP</name>
        <dbReference type="ChEBI" id="CHEBI:30616"/>
    </ligand>
</feature>
<reference key="1">
    <citation type="journal article" date="2007" name="J. Bacteriol.">
        <title>The genome sequence of avian pathogenic Escherichia coli strain O1:K1:H7 shares strong similarities with human extraintestinal pathogenic E. coli genomes.</title>
        <authorList>
            <person name="Johnson T.J."/>
            <person name="Kariyawasam S."/>
            <person name="Wannemuehler Y."/>
            <person name="Mangiamele P."/>
            <person name="Johnson S.J."/>
            <person name="Doetkott C."/>
            <person name="Skyberg J.A."/>
            <person name="Lynne A.M."/>
            <person name="Johnson J.R."/>
            <person name="Nolan L.K."/>
        </authorList>
    </citation>
    <scope>NUCLEOTIDE SEQUENCE [LARGE SCALE GENOMIC DNA]</scope>
</reference>
<accession>A1AES5</accession>
<name>MUTS_ECOK1</name>
<gene>
    <name evidence="1" type="primary">mutS</name>
    <name type="ordered locus">Ecok1_26710</name>
    <name type="ORF">APECO1_3791</name>
</gene>
<proteinExistence type="inferred from homology"/>
<keyword id="KW-0067">ATP-binding</keyword>
<keyword id="KW-0227">DNA damage</keyword>
<keyword id="KW-0234">DNA repair</keyword>
<keyword id="KW-0238">DNA-binding</keyword>
<keyword id="KW-0547">Nucleotide-binding</keyword>
<keyword id="KW-1185">Reference proteome</keyword>
<sequence>MSTIENFDAHTPMMQQYLKLKAQHPEILLFYRMGDFYELFYDDAKRASQLLDISLTKRGASAGEPIPMAGIPYHAVENYLAKLVNQGESVAICEQIGDPATSKGPVERKVVRIVTPGTISDEALLQERQDNLLAAIWQDSKGFGYATLDISSGRFRLSEPADRETMAAELQRTNPAELLYAEDFAEMSLIEGRRGLRRRPLWEFEIDTARQQLNLQFGTRDLVGFGVENAPRGLCAAGCLLQYAKDTQRTTLPHIRSITMERQQDSIIMDAATRRNLEITQNLAGGAENTLASVLDCTVTPMGSRMLKRWLHMPVRDTRVLLERQQTIGALQDFTAELQPVLRQVGDLERILARLALRTARPRDLARMRHAFQQLPELRAQLENVDSAPVQALREKMGEFAELRDLLERAIIDTPPVLVRDGGVIATGYNEELDEWRALADGATDYLERLEVRERERTGLDTLKVGFNAVHGYYIQISRGQSHLAPINYMRRQTLKNAERYIIPELKEYEDKVLTSKGKALALEKQLYEELFDLLLPHLEALQQSASALAELDVLVNLAERAYTLNYTCPTFIDKPGIRITEGRHPVVEQVLNEPFIANPLNLSPQRRMLIITGPNMGGKSTYMRQTALIALMAYIGSYVPAQKVEIGPIDRIFTRVGAADDLASGRSTFMVEMTETANILHNATEYSLVLMDEIGRGTSTYDGLSLAWACAENLANKIKALTLFATHYFELTQLPEKMEGVANVHLDALEHGDTIAFMHSVQDGAASKSYGLAVAALAGVPKEVIKRARQKLRELESISPNAAATQVDGTQMSLLSVPEETSPAVEALENLDPDSLTPRQALEWIYRLKSLV</sequence>